<gene>
    <name type="primary">ubiB</name>
</gene>
<comment type="function">
    <text evidence="1">Is probably a protein kinase regulator of UbiI activity which is involved in aerobic coenzyme Q (ubiquinone) biosynthesis.</text>
</comment>
<comment type="pathway">
    <text>Cofactor biosynthesis; ubiquinone biosynthesis [regulation].</text>
</comment>
<comment type="subcellular location">
    <subcellularLocation>
        <location evidence="1">Cell inner membrane</location>
        <topology evidence="1">Multi-pass membrane protein</topology>
    </subcellularLocation>
</comment>
<comment type="similarity">
    <text evidence="3">Belongs to the ABC1 family. UbiB subfamily.</text>
</comment>
<evidence type="ECO:0000250" key="1"/>
<evidence type="ECO:0000255" key="2"/>
<evidence type="ECO:0000305" key="3"/>
<reference key="1">
    <citation type="submission" date="1996-03" db="EMBL/GenBank/DDBJ databases">
        <authorList>
            <person name="Yates M."/>
            <person name="Souza E.M."/>
        </authorList>
    </citation>
    <scope>NUCLEOTIDE SEQUENCE [GENOMIC DNA]</scope>
    <source>
        <strain>MCD1</strain>
    </source>
</reference>
<name>UBIB_AZOCH</name>
<feature type="chain" id="PRO_0000200699" description="Probable protein kinase UbiB">
    <location>
        <begin position="1" status="less than"/>
        <end position="177"/>
    </location>
</feature>
<feature type="transmembrane region" description="Helical" evidence="2">
    <location>
        <begin position="129"/>
        <end position="146"/>
    </location>
</feature>
<feature type="transmembrane region" description="Helical" evidence="2">
    <location>
        <begin position="152"/>
        <end position="170"/>
    </location>
</feature>
<feature type="domain" description="Protein kinase">
    <location>
        <begin position="1" status="less than"/>
        <end position="130"/>
    </location>
</feature>
<feature type="non-terminal residue">
    <location>
        <position position="1"/>
    </location>
</feature>
<keyword id="KW-0067">ATP-binding</keyword>
<keyword id="KW-0997">Cell inner membrane</keyword>
<keyword id="KW-1003">Cell membrane</keyword>
<keyword id="KW-0418">Kinase</keyword>
<keyword id="KW-0472">Membrane</keyword>
<keyword id="KW-0547">Nucleotide-binding</keyword>
<keyword id="KW-0808">Transferase</keyword>
<keyword id="KW-0812">Transmembrane</keyword>
<keyword id="KW-1133">Transmembrane helix</keyword>
<keyword id="KW-0831">Ubiquinone biosynthesis</keyword>
<dbReference type="EC" id="2.7.-.-"/>
<dbReference type="EMBL" id="U48404">
    <property type="protein sequence ID" value="AAA92105.1"/>
    <property type="molecule type" value="Genomic_DNA"/>
</dbReference>
<dbReference type="UniPathway" id="UPA00232"/>
<dbReference type="GO" id="GO:0005886">
    <property type="term" value="C:plasma membrane"/>
    <property type="evidence" value="ECO:0007669"/>
    <property type="project" value="UniProtKB-SubCell"/>
</dbReference>
<dbReference type="GO" id="GO:0005524">
    <property type="term" value="F:ATP binding"/>
    <property type="evidence" value="ECO:0007669"/>
    <property type="project" value="UniProtKB-KW"/>
</dbReference>
<dbReference type="GO" id="GO:0016301">
    <property type="term" value="F:kinase activity"/>
    <property type="evidence" value="ECO:0007669"/>
    <property type="project" value="UniProtKB-KW"/>
</dbReference>
<dbReference type="GO" id="GO:0006744">
    <property type="term" value="P:ubiquinone biosynthetic process"/>
    <property type="evidence" value="ECO:0007669"/>
    <property type="project" value="UniProtKB-UniPathway"/>
</dbReference>
<dbReference type="InterPro" id="IPR011009">
    <property type="entry name" value="Kinase-like_dom_sf"/>
</dbReference>
<dbReference type="SUPFAM" id="SSF56112">
    <property type="entry name" value="Protein kinase-like (PK-like)"/>
    <property type="match status" value="1"/>
</dbReference>
<organism>
    <name type="scientific">Azotobacter chroococcum mcd 1</name>
    <dbReference type="NCBI Taxonomy" id="355"/>
    <lineage>
        <taxon>Bacteria</taxon>
        <taxon>Pseudomonadati</taxon>
        <taxon>Pseudomonadota</taxon>
        <taxon>Gammaproteobacteria</taxon>
        <taxon>Pseudomonadales</taxon>
        <taxon>Pseudomonadaceae</taxon>
        <taxon>Azotobacter</taxon>
    </lineage>
</organism>
<protein>
    <recommendedName>
        <fullName>Probable protein kinase UbiB</fullName>
        <ecNumber>2.7.-.-</ecNumber>
    </recommendedName>
    <alternativeName>
        <fullName>Ubiquinone biosynthesis protein UbiB</fullName>
    </alternativeName>
</protein>
<proteinExistence type="inferred from homology"/>
<sequence>EFEAAIRTVCEPIFEKPLKDISFGQLLLRLFQTARRFNMEVQPQLVLLQKTLLNIEGLGRQLYPELDLWTTAKPFLERWMRKRMSPKAMLDNLQGQLEQLPHLAQMTRAALEGMARPAHGAPPPRDRHILRLLGAALLAGGVLLASRAPLNVADAWPGWLMLASGLYLLVRRQRFPD</sequence>
<accession>Q43924</accession>